<keyword id="KW-0194">Cyanelle</keyword>
<keyword id="KW-0934">Plastid</keyword>
<keyword id="KW-0687">Ribonucleoprotein</keyword>
<keyword id="KW-0689">Ribosomal protein</keyword>
<keyword id="KW-0694">RNA-binding</keyword>
<keyword id="KW-0699">rRNA-binding</keyword>
<geneLocation type="cyanelle"/>
<gene>
    <name type="primary">rps3</name>
</gene>
<accession>P23401</accession>
<sequence>MGQKIHPIGFRLGITQKHRSCWFANPKQYPTLLQEDHLIRQYIEKNLSNAGIAQIYIQRKADRIELELRTARPGVVVGRGGRGIEVLRKGLKDLLGEQKQIRINVIEVKQIDAEAALIGEFITQQLERRVAFRRIVRKAITRAQRRGIEGIKIQISGRLNGAEIARSEWSREGRVPLQTLRAEIDYSYKRAQTIYGVLGVKVWIFKGEVIPGNPTEISE</sequence>
<proteinExistence type="inferred from homology"/>
<name>RR3_CYAPA</name>
<reference key="1">
    <citation type="journal article" date="1990" name="Mol. Gen. Genet.">
        <title>The cyanelle S10 spc ribosomal protein gene operon from Cyanophora paradoxa.</title>
        <authorList>
            <person name="Michalowski C.B."/>
            <person name="Pfanzagl B."/>
            <person name="Loeffelhardt W."/>
            <person name="Bohnert H.J."/>
        </authorList>
    </citation>
    <scope>NUCLEOTIDE SEQUENCE [GENOMIC DNA]</scope>
    <source>
        <strain>UTEX LB 555 / Pringsheim</strain>
    </source>
</reference>
<reference key="2">
    <citation type="journal article" date="1995" name="Plant Mol. Biol. Rep.">
        <title>Nucleotide sequence of the cyanelle DNA from Cyanophora paradoxa.</title>
        <authorList>
            <person name="Stirewalt V.L."/>
            <person name="Michalowski C.B."/>
            <person name="Loeffelhardt W."/>
            <person name="Bohnert H.J."/>
            <person name="Bryant D.A."/>
        </authorList>
    </citation>
    <scope>NUCLEOTIDE SEQUENCE [LARGE SCALE GENOMIC DNA]</scope>
    <source>
        <strain>UTEX LB 555 / Pringsheim</strain>
    </source>
</reference>
<reference key="3">
    <citation type="book" date="1997" name="Eukaryotism and symbiosis">
        <title>The complete sequence of the cyanelle genome of Cyanophora paradoxa: the genetic complexity of a primitive plastid.</title>
        <editorList>
            <person name="Schenk H.E.A."/>
            <person name="Herrmann R."/>
            <person name="Jeon K.W."/>
            <person name="Mueller N.E."/>
            <person name="Schwemmler W."/>
        </editorList>
        <authorList>
            <person name="Loeffelhardt W."/>
            <person name="Stirewalt V.L."/>
            <person name="Michalowski C.B."/>
            <person name="Annarella M."/>
            <person name="Farley J.Y."/>
            <person name="Schluchter W.M."/>
            <person name="Chung S."/>
            <person name="Newmann-Spallart C."/>
            <person name="Steiner J.M."/>
            <person name="Jakowitsch J."/>
            <person name="Bohnert H.J."/>
            <person name="Bryant D.A."/>
        </authorList>
    </citation>
    <scope>NUCLEOTIDE SEQUENCE [LARGE SCALE GENOMIC DNA]</scope>
    <source>
        <strain>UTEX LB 555 / Pringsheim</strain>
    </source>
</reference>
<comment type="subunit">
    <text>Part of the 30S ribosomal subunit.</text>
</comment>
<comment type="subcellular location">
    <subcellularLocation>
        <location>Plastid</location>
        <location>Cyanelle</location>
    </subcellularLocation>
</comment>
<comment type="similarity">
    <text evidence="1">Belongs to the universal ribosomal protein uS3 family.</text>
</comment>
<evidence type="ECO:0000305" key="1"/>
<protein>
    <recommendedName>
        <fullName evidence="1">Small ribosomal subunit protein uS3c</fullName>
    </recommendedName>
    <alternativeName>
        <fullName>Cyanelle 30S ribosomal protein S3</fullName>
    </alternativeName>
</protein>
<dbReference type="EMBL" id="M30487">
    <property type="protein sequence ID" value="AAA63621.1"/>
    <property type="molecule type" value="Genomic_DNA"/>
</dbReference>
<dbReference type="EMBL" id="U30821">
    <property type="protein sequence ID" value="AAA81227.1"/>
    <property type="molecule type" value="Genomic_DNA"/>
</dbReference>
<dbReference type="PIR" id="S12212">
    <property type="entry name" value="R3KT3"/>
</dbReference>
<dbReference type="RefSeq" id="NP_043196.1">
    <property type="nucleotide sequence ID" value="NC_001675.1"/>
</dbReference>
<dbReference type="SMR" id="P23401"/>
<dbReference type="GeneID" id="801608"/>
<dbReference type="GO" id="GO:0009842">
    <property type="term" value="C:cyanelle"/>
    <property type="evidence" value="ECO:0007669"/>
    <property type="project" value="UniProtKB-SubCell"/>
</dbReference>
<dbReference type="GO" id="GO:0022627">
    <property type="term" value="C:cytosolic small ribosomal subunit"/>
    <property type="evidence" value="ECO:0007669"/>
    <property type="project" value="TreeGrafter"/>
</dbReference>
<dbReference type="GO" id="GO:0019843">
    <property type="term" value="F:rRNA binding"/>
    <property type="evidence" value="ECO:0007669"/>
    <property type="project" value="UniProtKB-KW"/>
</dbReference>
<dbReference type="GO" id="GO:0003735">
    <property type="term" value="F:structural constituent of ribosome"/>
    <property type="evidence" value="ECO:0007669"/>
    <property type="project" value="InterPro"/>
</dbReference>
<dbReference type="GO" id="GO:0006412">
    <property type="term" value="P:translation"/>
    <property type="evidence" value="ECO:0007669"/>
    <property type="project" value="InterPro"/>
</dbReference>
<dbReference type="CDD" id="cd02412">
    <property type="entry name" value="KH-II_30S_S3"/>
    <property type="match status" value="1"/>
</dbReference>
<dbReference type="FunFam" id="3.30.300.20:FF:000001">
    <property type="entry name" value="30S ribosomal protein S3"/>
    <property type="match status" value="1"/>
</dbReference>
<dbReference type="Gene3D" id="3.30.300.20">
    <property type="match status" value="1"/>
</dbReference>
<dbReference type="Gene3D" id="3.30.1140.32">
    <property type="entry name" value="Ribosomal protein S3, C-terminal domain"/>
    <property type="match status" value="1"/>
</dbReference>
<dbReference type="HAMAP" id="MF_01309_B">
    <property type="entry name" value="Ribosomal_uS3_B"/>
    <property type="match status" value="1"/>
</dbReference>
<dbReference type="InterPro" id="IPR015946">
    <property type="entry name" value="KH_dom-like_a/b"/>
</dbReference>
<dbReference type="InterPro" id="IPR004044">
    <property type="entry name" value="KH_dom_type_2"/>
</dbReference>
<dbReference type="InterPro" id="IPR009019">
    <property type="entry name" value="KH_sf_prok-type"/>
</dbReference>
<dbReference type="InterPro" id="IPR036419">
    <property type="entry name" value="Ribosomal_S3_C_sf"/>
</dbReference>
<dbReference type="InterPro" id="IPR005704">
    <property type="entry name" value="Ribosomal_uS3_bac-typ"/>
</dbReference>
<dbReference type="InterPro" id="IPR001351">
    <property type="entry name" value="Ribosomal_uS3_C"/>
</dbReference>
<dbReference type="InterPro" id="IPR018280">
    <property type="entry name" value="Ribosomal_uS3_CS"/>
</dbReference>
<dbReference type="NCBIfam" id="TIGR01009">
    <property type="entry name" value="rpsC_bact"/>
    <property type="match status" value="1"/>
</dbReference>
<dbReference type="PANTHER" id="PTHR11760">
    <property type="entry name" value="30S/40S RIBOSOMAL PROTEIN S3"/>
    <property type="match status" value="1"/>
</dbReference>
<dbReference type="PANTHER" id="PTHR11760:SF19">
    <property type="entry name" value="SMALL RIBOSOMAL SUBUNIT PROTEIN US3C"/>
    <property type="match status" value="1"/>
</dbReference>
<dbReference type="Pfam" id="PF07650">
    <property type="entry name" value="KH_2"/>
    <property type="match status" value="1"/>
</dbReference>
<dbReference type="Pfam" id="PF00189">
    <property type="entry name" value="Ribosomal_S3_C"/>
    <property type="match status" value="1"/>
</dbReference>
<dbReference type="SUPFAM" id="SSF54814">
    <property type="entry name" value="Prokaryotic type KH domain (KH-domain type II)"/>
    <property type="match status" value="1"/>
</dbReference>
<dbReference type="SUPFAM" id="SSF54821">
    <property type="entry name" value="Ribosomal protein S3 C-terminal domain"/>
    <property type="match status" value="1"/>
</dbReference>
<dbReference type="PROSITE" id="PS50823">
    <property type="entry name" value="KH_TYPE_2"/>
    <property type="match status" value="1"/>
</dbReference>
<dbReference type="PROSITE" id="PS00548">
    <property type="entry name" value="RIBOSOMAL_S3"/>
    <property type="match status" value="1"/>
</dbReference>
<organism>
    <name type="scientific">Cyanophora paradoxa</name>
    <dbReference type="NCBI Taxonomy" id="2762"/>
    <lineage>
        <taxon>Eukaryota</taxon>
        <taxon>Glaucocystophyceae</taxon>
        <taxon>Cyanophoraceae</taxon>
        <taxon>Cyanophora</taxon>
    </lineage>
</organism>
<feature type="chain" id="PRO_0000130279" description="Small ribosomal subunit protein uS3c">
    <location>
        <begin position="1"/>
        <end position="219"/>
    </location>
</feature>
<feature type="domain" description="KH type-2">
    <location>
        <begin position="39"/>
        <end position="109"/>
    </location>
</feature>